<dbReference type="EC" id="2.7.2.7" evidence="1"/>
<dbReference type="EMBL" id="CP000139">
    <property type="protein sequence ID" value="ABR39009.1"/>
    <property type="molecule type" value="Genomic_DNA"/>
</dbReference>
<dbReference type="RefSeq" id="WP_005838784.1">
    <property type="nucleotide sequence ID" value="NZ_JANSWM010000083.1"/>
</dbReference>
<dbReference type="SMR" id="A6KZZ5"/>
<dbReference type="STRING" id="435590.BVU_1320"/>
<dbReference type="PaxDb" id="435590-BVU_1320"/>
<dbReference type="GeneID" id="5302286"/>
<dbReference type="KEGG" id="bvu:BVU_1320"/>
<dbReference type="eggNOG" id="COG3426">
    <property type="taxonomic scope" value="Bacteria"/>
</dbReference>
<dbReference type="HOGENOM" id="CLU_048716_0_0_10"/>
<dbReference type="BioCyc" id="BVUL435590:G1G59-1378-MONOMER"/>
<dbReference type="Proteomes" id="UP000002861">
    <property type="component" value="Chromosome"/>
</dbReference>
<dbReference type="GO" id="GO:0005737">
    <property type="term" value="C:cytoplasm"/>
    <property type="evidence" value="ECO:0007669"/>
    <property type="project" value="UniProtKB-SubCell"/>
</dbReference>
<dbReference type="GO" id="GO:0008776">
    <property type="term" value="F:acetate kinase activity"/>
    <property type="evidence" value="ECO:0007669"/>
    <property type="project" value="TreeGrafter"/>
</dbReference>
<dbReference type="GO" id="GO:0005524">
    <property type="term" value="F:ATP binding"/>
    <property type="evidence" value="ECO:0007669"/>
    <property type="project" value="UniProtKB-KW"/>
</dbReference>
<dbReference type="GO" id="GO:0047761">
    <property type="term" value="F:butyrate kinase activity"/>
    <property type="evidence" value="ECO:0007669"/>
    <property type="project" value="UniProtKB-UniRule"/>
</dbReference>
<dbReference type="GO" id="GO:0006083">
    <property type="term" value="P:acetate metabolic process"/>
    <property type="evidence" value="ECO:0007669"/>
    <property type="project" value="TreeGrafter"/>
</dbReference>
<dbReference type="CDD" id="cd24011">
    <property type="entry name" value="ASKHA_NBD_BK"/>
    <property type="match status" value="1"/>
</dbReference>
<dbReference type="Gene3D" id="3.30.420.40">
    <property type="match status" value="2"/>
</dbReference>
<dbReference type="HAMAP" id="MF_00542">
    <property type="entry name" value="Butyrate_kinase"/>
    <property type="match status" value="1"/>
</dbReference>
<dbReference type="InterPro" id="IPR000890">
    <property type="entry name" value="Aliphatic_acid_kin_short-chain"/>
</dbReference>
<dbReference type="InterPro" id="IPR023865">
    <property type="entry name" value="Aliphatic_acid_kinase_CS"/>
</dbReference>
<dbReference type="InterPro" id="IPR043129">
    <property type="entry name" value="ATPase_NBD"/>
</dbReference>
<dbReference type="InterPro" id="IPR011245">
    <property type="entry name" value="Butyrate_kin"/>
</dbReference>
<dbReference type="NCBIfam" id="TIGR02707">
    <property type="entry name" value="butyr_kinase"/>
    <property type="match status" value="1"/>
</dbReference>
<dbReference type="NCBIfam" id="NF002834">
    <property type="entry name" value="PRK03011.1-5"/>
    <property type="match status" value="1"/>
</dbReference>
<dbReference type="PANTHER" id="PTHR21060">
    <property type="entry name" value="ACETATE KINASE"/>
    <property type="match status" value="1"/>
</dbReference>
<dbReference type="PANTHER" id="PTHR21060:SF3">
    <property type="entry name" value="BUTYRATE KINASE 2-RELATED"/>
    <property type="match status" value="1"/>
</dbReference>
<dbReference type="Pfam" id="PF00871">
    <property type="entry name" value="Acetate_kinase"/>
    <property type="match status" value="1"/>
</dbReference>
<dbReference type="PIRSF" id="PIRSF036458">
    <property type="entry name" value="Butyrate_kin"/>
    <property type="match status" value="1"/>
</dbReference>
<dbReference type="PRINTS" id="PR00471">
    <property type="entry name" value="ACETATEKNASE"/>
</dbReference>
<dbReference type="SUPFAM" id="SSF53067">
    <property type="entry name" value="Actin-like ATPase domain"/>
    <property type="match status" value="2"/>
</dbReference>
<dbReference type="PROSITE" id="PS01076">
    <property type="entry name" value="ACETATE_KINASE_2"/>
    <property type="match status" value="1"/>
</dbReference>
<proteinExistence type="inferred from homology"/>
<name>BUK_PHOV8</name>
<reference key="1">
    <citation type="journal article" date="2007" name="PLoS Biol.">
        <title>Evolution of symbiotic bacteria in the distal human intestine.</title>
        <authorList>
            <person name="Xu J."/>
            <person name="Mahowald M.A."/>
            <person name="Ley R.E."/>
            <person name="Lozupone C.A."/>
            <person name="Hamady M."/>
            <person name="Martens E.C."/>
            <person name="Henrissat B."/>
            <person name="Coutinho P.M."/>
            <person name="Minx P."/>
            <person name="Latreille P."/>
            <person name="Cordum H."/>
            <person name="Van Brunt A."/>
            <person name="Kim K."/>
            <person name="Fulton R.S."/>
            <person name="Fulton L.A."/>
            <person name="Clifton S.W."/>
            <person name="Wilson R.K."/>
            <person name="Knight R.D."/>
            <person name="Gordon J.I."/>
        </authorList>
    </citation>
    <scope>NUCLEOTIDE SEQUENCE [LARGE SCALE GENOMIC DNA]</scope>
    <source>
        <strain>ATCC 8482 / DSM 1447 / JCM 5826 / CCUG 4940 / NBRC 14291 / NCTC 11154</strain>
    </source>
</reference>
<gene>
    <name evidence="1" type="primary">buk</name>
    <name type="ordered locus">BVU_1320</name>
</gene>
<keyword id="KW-0067">ATP-binding</keyword>
<keyword id="KW-0963">Cytoplasm</keyword>
<keyword id="KW-0418">Kinase</keyword>
<keyword id="KW-0547">Nucleotide-binding</keyword>
<keyword id="KW-0808">Transferase</keyword>
<organism>
    <name type="scientific">Phocaeicola vulgatus (strain ATCC 8482 / DSM 1447 / JCM 5826 / CCUG 4940 / NBRC 14291 / NCTC 11154)</name>
    <name type="common">Bacteroides vulgatus</name>
    <dbReference type="NCBI Taxonomy" id="435590"/>
    <lineage>
        <taxon>Bacteria</taxon>
        <taxon>Pseudomonadati</taxon>
        <taxon>Bacteroidota</taxon>
        <taxon>Bacteroidia</taxon>
        <taxon>Bacteroidales</taxon>
        <taxon>Bacteroidaceae</taxon>
        <taxon>Phocaeicola</taxon>
    </lineage>
</organism>
<feature type="chain" id="PRO_1000061066" description="Probable butyrate kinase">
    <location>
        <begin position="1"/>
        <end position="354"/>
    </location>
</feature>
<accession>A6KZZ5</accession>
<sequence>MKIFVINPGSTSTKIALFIDEKPVWAAGAHHTADDLSEFHHVNEQYAYRKDFVLRLLAEADIPLDFDAVIARGGLLKPTPGGVYAINEQMKHDLLNARMEHACNLGALIADEIARECHCPAYIADPEVVDELQPAARLTGIPEIERISIFHALNSKAVSRKYAASIGKHYEELNLIVVHLGGGISVGAHCKGRVIDVNNALNGEGPFSPERAGTIPADQLAELCFSGKYTLKQIKKMLNGKGGLTAHLGMNDVVTIARKASEGEEPYKGVLDAMLYTVAKQAGAMYVTLRGQVDAIILTGGIAHSDYCVGILKEQIDYLAPVVLMPGEDEMGSLAYNALGALKGELPLQVYRPE</sequence>
<evidence type="ECO:0000255" key="1">
    <source>
        <dbReference type="HAMAP-Rule" id="MF_00542"/>
    </source>
</evidence>
<comment type="catalytic activity">
    <reaction evidence="1">
        <text>butanoate + ATP = butanoyl phosphate + ADP</text>
        <dbReference type="Rhea" id="RHEA:13585"/>
        <dbReference type="ChEBI" id="CHEBI:17968"/>
        <dbReference type="ChEBI" id="CHEBI:30616"/>
        <dbReference type="ChEBI" id="CHEBI:58079"/>
        <dbReference type="ChEBI" id="CHEBI:456216"/>
        <dbReference type="EC" id="2.7.2.7"/>
    </reaction>
</comment>
<comment type="subcellular location">
    <subcellularLocation>
        <location evidence="1">Cytoplasm</location>
    </subcellularLocation>
</comment>
<comment type="similarity">
    <text evidence="1">Belongs to the acetokinase family.</text>
</comment>
<protein>
    <recommendedName>
        <fullName evidence="1">Probable butyrate kinase</fullName>
        <shortName evidence="1">BK</shortName>
        <ecNumber evidence="1">2.7.2.7</ecNumber>
    </recommendedName>
    <alternativeName>
        <fullName evidence="1">Branched-chain carboxylic acid kinase</fullName>
    </alternativeName>
</protein>